<dbReference type="EMBL" id="AY651368">
    <property type="protein sequence ID" value="AAT73308.1"/>
    <property type="molecule type" value="Genomic_RNA"/>
</dbReference>
<dbReference type="SMR" id="Q6DPZ9"/>
<dbReference type="GlyCosmos" id="Q6DPZ9">
    <property type="glycosylation" value="6 sites, No reported glycans"/>
</dbReference>
<dbReference type="GO" id="GO:0020002">
    <property type="term" value="C:host cell plasma membrane"/>
    <property type="evidence" value="ECO:0007669"/>
    <property type="project" value="UniProtKB-SubCell"/>
</dbReference>
<dbReference type="GO" id="GO:0016020">
    <property type="term" value="C:membrane"/>
    <property type="evidence" value="ECO:0007669"/>
    <property type="project" value="UniProtKB-KW"/>
</dbReference>
<dbReference type="GO" id="GO:0019031">
    <property type="term" value="C:viral envelope"/>
    <property type="evidence" value="ECO:0007669"/>
    <property type="project" value="UniProtKB-KW"/>
</dbReference>
<dbReference type="GO" id="GO:0055036">
    <property type="term" value="C:virion membrane"/>
    <property type="evidence" value="ECO:0007669"/>
    <property type="project" value="UniProtKB-SubCell"/>
</dbReference>
<dbReference type="GO" id="GO:0046789">
    <property type="term" value="F:host cell surface receptor binding"/>
    <property type="evidence" value="ECO:0007669"/>
    <property type="project" value="InterPro"/>
</dbReference>
<dbReference type="GO" id="GO:0075512">
    <property type="term" value="P:clathrin-dependent endocytosis of virus by host cell"/>
    <property type="evidence" value="ECO:0007669"/>
    <property type="project" value="UniProtKB-KW"/>
</dbReference>
<dbReference type="GO" id="GO:0039654">
    <property type="term" value="P:fusion of virus membrane with host endosome membrane"/>
    <property type="evidence" value="ECO:0007669"/>
    <property type="project" value="UniProtKB-KW"/>
</dbReference>
<dbReference type="GO" id="GO:0019064">
    <property type="term" value="P:fusion of virus membrane with host plasma membrane"/>
    <property type="evidence" value="ECO:0007669"/>
    <property type="project" value="InterPro"/>
</dbReference>
<dbReference type="GO" id="GO:0019062">
    <property type="term" value="P:virion attachment to host cell"/>
    <property type="evidence" value="ECO:0007669"/>
    <property type="project" value="UniProtKB-KW"/>
</dbReference>
<dbReference type="FunFam" id="3.90.209.20:FF:000001">
    <property type="entry name" value="Hemagglutinin"/>
    <property type="match status" value="1"/>
</dbReference>
<dbReference type="Gene3D" id="3.90.20.10">
    <property type="match status" value="1"/>
</dbReference>
<dbReference type="Gene3D" id="3.90.209.20">
    <property type="match status" value="1"/>
</dbReference>
<dbReference type="HAMAP" id="MF_04072">
    <property type="entry name" value="INFV_HEMA"/>
    <property type="match status" value="1"/>
</dbReference>
<dbReference type="InterPro" id="IPR008980">
    <property type="entry name" value="Capsid_hemagglutn"/>
</dbReference>
<dbReference type="InterPro" id="IPR013828">
    <property type="entry name" value="Hemagglutn_HA1_a/b_dom_sf"/>
</dbReference>
<dbReference type="InterPro" id="IPR000149">
    <property type="entry name" value="Hemagglutn_influenz_A"/>
</dbReference>
<dbReference type="InterPro" id="IPR001364">
    <property type="entry name" value="Hemagglutn_influenz_A/B"/>
</dbReference>
<dbReference type="Pfam" id="PF00509">
    <property type="entry name" value="Hemagglutinin"/>
    <property type="match status" value="1"/>
</dbReference>
<dbReference type="PRINTS" id="PR00330">
    <property type="entry name" value="HEMAGGLUTN1"/>
</dbReference>
<dbReference type="PRINTS" id="PR00329">
    <property type="entry name" value="HEMAGGLUTN12"/>
</dbReference>
<dbReference type="SUPFAM" id="SSF58064">
    <property type="entry name" value="Influenza hemagglutinin (stalk)"/>
    <property type="match status" value="1"/>
</dbReference>
<dbReference type="SUPFAM" id="SSF49818">
    <property type="entry name" value="Viral protein domain"/>
    <property type="match status" value="1"/>
</dbReference>
<accession>Q6DPZ9</accession>
<organismHost>
    <name type="scientific">Aves</name>
    <dbReference type="NCBI Taxonomy" id="8782"/>
</organismHost>
<organismHost>
    <name type="scientific">Felis catus</name>
    <name type="common">Cat</name>
    <name type="synonym">Felis silvestris catus</name>
    <dbReference type="NCBI Taxonomy" id="9685"/>
</organismHost>
<organismHost>
    <name type="scientific">Homo sapiens</name>
    <name type="common">Human</name>
    <dbReference type="NCBI Taxonomy" id="9606"/>
</organismHost>
<organismHost>
    <name type="scientific">Panthera pardus</name>
    <name type="common">Leopard</name>
    <name type="synonym">Felis pardus</name>
    <dbReference type="NCBI Taxonomy" id="9691"/>
</organismHost>
<organismHost>
    <name type="scientific">Panthera tigris</name>
    <name type="common">Tiger</name>
    <dbReference type="NCBI Taxonomy" id="9694"/>
</organismHost>
<organismHost>
    <name type="scientific">Sus scrofa</name>
    <name type="common">Pig</name>
    <dbReference type="NCBI Taxonomy" id="9823"/>
</organismHost>
<evidence type="ECO:0000255" key="1">
    <source>
        <dbReference type="HAMAP-Rule" id="MF_04072"/>
    </source>
</evidence>
<sequence length="565" mass="63923">MEKIVLLLAIVSLVKSDQICIGYHANNSTEQVDTIMEKNVTVTHAQDILEKTHNGKLCDLDGVKPLILRDCSVAGWLLGNPMCDEFLNVPEWSYIVEKANPANDLCYPGNFNDYEELKHLLSRINHFEKIQIIPKSSWSDHEASSGVSSACPYQGRSSFFRNVVWLIKKDSTYPTIKRSYNNTNQEDLLVLWGIHHPNDAAEQTRLYQNPTTYISVGTSTLNQRLVPKIATRSKVNGQSGRIEFFWTILKPNDAINFESNGNFIAPEYAYKIVKKGDSAIMKSELGYGNCNTKCQTPIGAINSSMPFHNIHPLTIGECPKYVKSSRLVLATGLRNSPQRERRRKKRGLFGAIAGFIEGGWQGMVDGWYGYHHSNEQGSGYAADKESTQKAIDGVTNKVNSIIDKMNTQFEAVGREFNNLERRIENLNKKMEDGFLDVWTYNAELLVLMENERTLDFHDSNVKNLYDKVRLQLRDNAKELGNGCFEFYHRCDNECMESVRNGTYDYPQYSEEARLKREEISGVKLESIGTYQILSIYSTVASSLALAIMVAGLSLWMCSNGSLQCR</sequence>
<reference key="1">
    <citation type="journal article" date="2004" name="Nature">
        <title>Genesis of a highly pathogenic and potentially pandemic H5N1 influenza virus in eastern Asia.</title>
        <authorList>
            <person name="Li K.S."/>
            <person name="Guan Y."/>
            <person name="Wang J."/>
            <person name="Smith G.J.D."/>
            <person name="Xu K.M."/>
            <person name="Duan L."/>
            <person name="Rahardjo A.P."/>
            <person name="Puthavathana P."/>
            <person name="Buranathai C."/>
            <person name="Nguyen T.D."/>
            <person name="Estoepangestie A.T.S."/>
            <person name="Chaisingh A."/>
            <person name="Auewarakul P."/>
            <person name="Long H.T."/>
            <person name="Hanh N.T.H."/>
            <person name="Webby R.J."/>
            <person name="Poon L.L.M."/>
            <person name="Chen H."/>
            <person name="Shortridge K.F."/>
            <person name="Yuen K.Y."/>
            <person name="Webster R.G."/>
            <person name="Peiris J.S.M."/>
        </authorList>
    </citation>
    <scope>NUCLEOTIDE SEQUENCE [GENOMIC RNA]</scope>
</reference>
<protein>
    <recommendedName>
        <fullName evidence="1">Hemagglutinin</fullName>
    </recommendedName>
    <component>
        <recommendedName>
            <fullName evidence="1">Hemagglutinin HA1 chain</fullName>
        </recommendedName>
    </component>
    <component>
        <recommendedName>
            <fullName evidence="1">Hemagglutinin HA2 chain</fullName>
        </recommendedName>
    </component>
</protein>
<feature type="signal peptide" evidence="1">
    <location>
        <begin position="1"/>
        <end position="16"/>
    </location>
</feature>
<feature type="chain" id="PRO_0000440831" description="Hemagglutinin" evidence="1">
    <location>
        <begin position="17"/>
        <end position="565"/>
    </location>
</feature>
<feature type="chain" id="PRO_0000440832" description="Hemagglutinin HA1 chain" evidence="1">
    <location>
        <begin position="17"/>
        <end position="346"/>
    </location>
</feature>
<feature type="chain" id="PRO_0000440833" description="Hemagglutinin HA2 chain" evidence="1">
    <location>
        <begin position="347"/>
        <end position="565"/>
    </location>
</feature>
<feature type="topological domain" description="Extracellular" evidence="1">
    <location>
        <begin position="17"/>
        <end position="531"/>
    </location>
</feature>
<feature type="transmembrane region" description="Helical" evidence="1">
    <location>
        <begin position="532"/>
        <end position="552"/>
    </location>
</feature>
<feature type="topological domain" description="Cytoplasmic" evidence="1">
    <location>
        <begin position="553"/>
        <end position="565"/>
    </location>
</feature>
<feature type="site" description="Cleavage; by host" evidence="1">
    <location>
        <begin position="346"/>
        <end position="347"/>
    </location>
</feature>
<feature type="lipid moiety-binding region" description="S-palmitoyl cysteine; by host" evidence="1">
    <location>
        <position position="557"/>
    </location>
</feature>
<feature type="lipid moiety-binding region" description="S-palmitoyl cysteine; by host" evidence="1">
    <location>
        <position position="564"/>
    </location>
</feature>
<feature type="glycosylation site" description="N-linked (GlcNAc...) asparagine; by host" evidence="1">
    <location>
        <position position="26"/>
    </location>
</feature>
<feature type="glycosylation site" description="N-linked (GlcNAc...) asparagine; by host" evidence="1">
    <location>
        <position position="27"/>
    </location>
</feature>
<feature type="glycosylation site" description="N-linked (GlcNAc...) asparagine; by host" evidence="1">
    <location>
        <position position="39"/>
    </location>
</feature>
<feature type="glycosylation site" description="N-linked (GlcNAc...) asparagine; by host" evidence="1">
    <location>
        <position position="181"/>
    </location>
</feature>
<feature type="glycosylation site" description="N-linked (GlcNAc...) asparagine; by host" evidence="1">
    <location>
        <position position="302"/>
    </location>
</feature>
<feature type="glycosylation site" description="N-linked (GlcNAc...) asparagine; by host" evidence="1">
    <location>
        <position position="500"/>
    </location>
</feature>
<feature type="disulfide bond" description="Interchain (between HA1 and HA2 chains)" evidence="1">
    <location>
        <begin position="20"/>
        <end position="483"/>
    </location>
</feature>
<feature type="disulfide bond" evidence="1">
    <location>
        <begin position="58"/>
        <end position="290"/>
    </location>
</feature>
<feature type="disulfide bond" evidence="1">
    <location>
        <begin position="71"/>
        <end position="83"/>
    </location>
</feature>
<feature type="disulfide bond" evidence="1">
    <location>
        <begin position="106"/>
        <end position="151"/>
    </location>
</feature>
<feature type="disulfide bond" evidence="1">
    <location>
        <begin position="294"/>
        <end position="318"/>
    </location>
</feature>
<feature type="disulfide bond" evidence="1">
    <location>
        <begin position="490"/>
        <end position="494"/>
    </location>
</feature>
<feature type="non-terminal residue">
    <location>
        <position position="565"/>
    </location>
</feature>
<gene>
    <name evidence="1" type="primary">HA</name>
</gene>
<proteinExistence type="inferred from homology"/>
<keyword id="KW-1167">Clathrin- and caveolin-independent endocytosis of virus by host</keyword>
<keyword id="KW-1165">Clathrin-mediated endocytosis of virus by host</keyword>
<keyword id="KW-1015">Disulfide bond</keyword>
<keyword id="KW-1170">Fusion of virus membrane with host endosomal membrane</keyword>
<keyword id="KW-1168">Fusion of virus membrane with host membrane</keyword>
<keyword id="KW-0325">Glycoprotein</keyword>
<keyword id="KW-0348">Hemagglutinin</keyword>
<keyword id="KW-1032">Host cell membrane</keyword>
<keyword id="KW-1043">Host membrane</keyword>
<keyword id="KW-0945">Host-virus interaction</keyword>
<keyword id="KW-0449">Lipoprotein</keyword>
<keyword id="KW-0472">Membrane</keyword>
<keyword id="KW-0564">Palmitate</keyword>
<keyword id="KW-0732">Signal</keyword>
<keyword id="KW-0812">Transmembrane</keyword>
<keyword id="KW-1133">Transmembrane helix</keyword>
<keyword id="KW-1161">Viral attachment to host cell</keyword>
<keyword id="KW-0261">Viral envelope protein</keyword>
<keyword id="KW-1162">Viral penetration into host cytoplasm</keyword>
<keyword id="KW-0946">Virion</keyword>
<keyword id="KW-1164">Virus endocytosis by host</keyword>
<keyword id="KW-1160">Virus entry into host cell</keyword>
<organism>
    <name type="scientific">Influenza A virus (strain A/Chicken/Shantou/4231/2003 H5N1 genotype V)</name>
    <dbReference type="NCBI Taxonomy" id="284184"/>
    <lineage>
        <taxon>Viruses</taxon>
        <taxon>Riboviria</taxon>
        <taxon>Orthornavirae</taxon>
        <taxon>Negarnaviricota</taxon>
        <taxon>Polyploviricotina</taxon>
        <taxon>Insthoviricetes</taxon>
        <taxon>Articulavirales</taxon>
        <taxon>Orthomyxoviridae</taxon>
        <taxon>Alphainfluenzavirus</taxon>
        <taxon>Alphainfluenzavirus influenzae</taxon>
        <taxon>Influenza A virus</taxon>
    </lineage>
</organism>
<name>HEMA_I03A1</name>
<comment type="function">
    <text evidence="1">Binds to sialic acid-containing receptors on the cell surface, bringing about the attachment of the virus particle to the cell. This attachment induces virion internalization either through clathrin-dependent endocytosis or through clathrin- and caveolin-independent pathway. Plays a major role in the determination of host range restriction and virulence. Class I viral fusion protein. Responsible for penetration of the virus into the cell cytoplasm by mediating the fusion of the membrane of the endocytosed virus particle with the endosomal membrane. Low pH in endosomes induces an irreversible conformational change in HA2, releasing the fusion hydrophobic peptide. Several trimers are required to form a competent fusion pore.</text>
</comment>
<comment type="subunit">
    <text evidence="1">Homotrimer of disulfide-linked HA1-HA2.</text>
</comment>
<comment type="subcellular location">
    <subcellularLocation>
        <location evidence="1">Virion membrane</location>
        <topology evidence="1">Single-pass type I membrane protein</topology>
    </subcellularLocation>
    <subcellularLocation>
        <location evidence="1">Host apical cell membrane</location>
        <topology evidence="1">Single-pass type I membrane protein</topology>
    </subcellularLocation>
    <text evidence="1">Targeted to the apical plasma membrane in epithelial polarized cells through a signal present in the transmembrane domain. Associated with glycosphingolipid- and cholesterol-enriched detergent-resistant lipid rafts.</text>
</comment>
<comment type="PTM">
    <text evidence="1">Palmitoylated.</text>
</comment>
<comment type="PTM">
    <text evidence="1">In natural infection, inactive HA is matured into HA1 and HA2 outside the cell by one or more trypsin-like, arginine-specific endoprotease secreted by the bronchial epithelial cells. One identified protease that may be involved in this process is secreted in lungs by club cells.</text>
</comment>
<comment type="miscellaneous">
    <text>Major glycoprotein, comprises over 80% of the envelope proteins present in virus particle.</text>
</comment>
<comment type="miscellaneous">
    <text>The extent of infection into host organism is determined by HA. Influenza viruses bud from the apical surface of polarized epithelial cells (e.g. bronchial epithelial cells) into lumen of lungs and are therefore usually pneumotropic. The reason is that HA is cleaved by tryptase clara which is restricted to lungs. However, HAs of H5 and H7 pantropic avian viruses subtypes can be cleaved by furin and subtilisin-type enzymes, allowing the virus to grow in other organs than lungs.</text>
</comment>
<comment type="miscellaneous">
    <text>The influenza A genome consist of 8 RNA segments. Genetic variation of hemagglutinin and/or neuraminidase genes results in the emergence of new influenza strains. The mechanism of variation can be the result of point mutations or the result of genetic reassortment between segments of two different strains.</text>
</comment>
<comment type="similarity">
    <text evidence="1">Belongs to the influenza viruses hemagglutinin family.</text>
</comment>